<reference key="1">
    <citation type="journal article" date="2015" name="Genome Announc.">
        <title>Draft genome sequence of the cellulolytic fungus Chaetomium globosum.</title>
        <authorList>
            <person name="Cuomo C.A."/>
            <person name="Untereiner W.A."/>
            <person name="Ma L.-J."/>
            <person name="Grabherr M."/>
            <person name="Birren B.W."/>
        </authorList>
    </citation>
    <scope>NUCLEOTIDE SEQUENCE [LARGE SCALE GENOMIC DNA]</scope>
    <source>
        <strain>ATCC 6205 / CBS 148.51 / DSM 1962 / NBRC 6347 / NRRL 1970</strain>
    </source>
</reference>
<sequence>MSERTSSSRRSKPASDDTIGNFVIDKEIGKGSFAQVYSGRHKVTGALVAIKSVELARLNTKLKDNLYGEIEILKRLRHPHIVALHDCVESRTHINLIMEYCELGDLSLFIKKRDKLITNPGTHELARKYPVAPNSGLNEVVIRHFLKQLTSAIRFLREANLIHRDVKPQNLLLLPSPQYREANKMHKQILSASHDSFTPAAGLPSLPMLKLADFGFARVLPSTSLAETLCGSPLYMAPEILRYEKYDAKADLWSVGTVLYEMATGRPPFRAVNHVDLLRKIEASGDVIRFSRECVVSSEVKGLVRALLKRNPVERISFEDFFHHPVITGPIPGLVEDDIPKPEKPVLAETKSRIRRANPELSHTRRSRAGPHLLATPIEPKPNPLEQVASPRLSYSPRQEADEGLGIRRPLAQPSTSAPVRPISYVDRSRRYSNASTKVPARDTPPPPHEGSNRSRPKSAVSRPLTDEDKAAQDVAFERDYIIIDKTAVEVNALADQISLYPQQGQPKSGGQIVRRATQQGHPTSTTGAVPSHPGRNAQGGRNDHYRKASHDKTLSGSPGATTSVISKAIQDASLRLFGFKYSPQMLSKGQSPPQIYSPFPAYPTPSTPAGLIMDGKQSAPVDEDSRVAQCIEDYATRSDVVYGFAEVKYKQLVPLAPSVEHGLGGVPTDRMGEEEEGLTMDAVVSLSEEALVLYVKALSLLAKSMDIASLWWSRKSRPESSNNVHSATRDSVNTQALVLKINAAVQWIRSRFNEVLEKAEIVRLRLVEAQNQLPEEHPSHPSNRPPETSALGGSSGGQATFPSVGISAEKLMYDRAVEMSRTAAINEIASEDLPGCEISYVTAVRMLEAVLDSDDDHLPKRRVSTSSKEEQSVAAQDASDDMSSDDKQAVQKMVQMINTRLTYLRKRMHTIAAASKAQQQQQQQQVVVRRRSGDVTPRSVPT</sequence>
<evidence type="ECO:0000250" key="1">
    <source>
        <dbReference type="UniProtKB" id="P53104"/>
    </source>
</evidence>
<evidence type="ECO:0000255" key="2">
    <source>
        <dbReference type="PROSITE-ProRule" id="PRU00159"/>
    </source>
</evidence>
<evidence type="ECO:0000255" key="3">
    <source>
        <dbReference type="PROSITE-ProRule" id="PRU10027"/>
    </source>
</evidence>
<evidence type="ECO:0000256" key="4">
    <source>
        <dbReference type="SAM" id="MobiDB-lite"/>
    </source>
</evidence>
<evidence type="ECO:0000303" key="5">
    <source>
    </source>
</evidence>
<keyword id="KW-0067">ATP-binding</keyword>
<keyword id="KW-0072">Autophagy</keyword>
<keyword id="KW-0963">Cytoplasm</keyword>
<keyword id="KW-0418">Kinase</keyword>
<keyword id="KW-0472">Membrane</keyword>
<keyword id="KW-0547">Nucleotide-binding</keyword>
<keyword id="KW-0653">Protein transport</keyword>
<keyword id="KW-1185">Reference proteome</keyword>
<keyword id="KW-0723">Serine/threonine-protein kinase</keyword>
<keyword id="KW-0808">Transferase</keyword>
<keyword id="KW-0813">Transport</keyword>
<gene>
    <name evidence="1" type="primary">ATG1</name>
    <name evidence="5" type="ORF">CHGG_05593</name>
</gene>
<name>ATG1_CHAGB</name>
<accession>Q2H6X2</accession>
<feature type="chain" id="PRO_0000317792" description="Serine/threonine-protein kinase ATG1">
    <location>
        <begin position="1"/>
        <end position="943"/>
    </location>
</feature>
<feature type="domain" description="Protein kinase" evidence="2">
    <location>
        <begin position="22"/>
        <end position="327"/>
    </location>
</feature>
<feature type="region of interest" description="Disordered" evidence="4">
    <location>
        <begin position="334"/>
        <end position="468"/>
    </location>
</feature>
<feature type="region of interest" description="Disordered" evidence="4">
    <location>
        <begin position="503"/>
        <end position="561"/>
    </location>
</feature>
<feature type="region of interest" description="Disordered" evidence="4">
    <location>
        <begin position="774"/>
        <end position="800"/>
    </location>
</feature>
<feature type="region of interest" description="Disordered" evidence="4">
    <location>
        <begin position="858"/>
        <end position="888"/>
    </location>
</feature>
<feature type="region of interest" description="Disordered" evidence="4">
    <location>
        <begin position="914"/>
        <end position="943"/>
    </location>
</feature>
<feature type="compositionally biased region" description="Basic and acidic residues" evidence="4">
    <location>
        <begin position="338"/>
        <end position="352"/>
    </location>
</feature>
<feature type="compositionally biased region" description="Polar residues" evidence="4">
    <location>
        <begin position="517"/>
        <end position="529"/>
    </location>
</feature>
<feature type="compositionally biased region" description="Basic and acidic residues" evidence="4">
    <location>
        <begin position="542"/>
        <end position="554"/>
    </location>
</feature>
<feature type="compositionally biased region" description="Low complexity" evidence="4">
    <location>
        <begin position="919"/>
        <end position="928"/>
    </location>
</feature>
<feature type="active site" description="Proton acceptor" evidence="2 3">
    <location>
        <position position="165"/>
    </location>
</feature>
<feature type="binding site" evidence="2">
    <location>
        <begin position="28"/>
        <end position="36"/>
    </location>
    <ligand>
        <name>ATP</name>
        <dbReference type="ChEBI" id="CHEBI:30616"/>
    </ligand>
</feature>
<feature type="binding site" evidence="2">
    <location>
        <position position="51"/>
    </location>
    <ligand>
        <name>ATP</name>
        <dbReference type="ChEBI" id="CHEBI:30616"/>
    </ligand>
</feature>
<organism>
    <name type="scientific">Chaetomium globosum (strain ATCC 6205 / CBS 148.51 / DSM 1962 / NBRC 6347 / NRRL 1970)</name>
    <name type="common">Soil fungus</name>
    <dbReference type="NCBI Taxonomy" id="306901"/>
    <lineage>
        <taxon>Eukaryota</taxon>
        <taxon>Fungi</taxon>
        <taxon>Dikarya</taxon>
        <taxon>Ascomycota</taxon>
        <taxon>Pezizomycotina</taxon>
        <taxon>Sordariomycetes</taxon>
        <taxon>Sordariomycetidae</taxon>
        <taxon>Sordariales</taxon>
        <taxon>Chaetomiaceae</taxon>
        <taxon>Chaetomium</taxon>
    </lineage>
</organism>
<dbReference type="EC" id="2.7.11.1" evidence="1"/>
<dbReference type="EMBL" id="CH408031">
    <property type="protein sequence ID" value="EAQ88974.1"/>
    <property type="molecule type" value="Genomic_DNA"/>
</dbReference>
<dbReference type="RefSeq" id="XP_001221688.1">
    <property type="nucleotide sequence ID" value="XM_001221687.1"/>
</dbReference>
<dbReference type="SMR" id="Q2H6X2"/>
<dbReference type="FunCoup" id="Q2H6X2">
    <property type="interactions" value="64"/>
</dbReference>
<dbReference type="STRING" id="306901.Q2H6X2"/>
<dbReference type="GeneID" id="4390436"/>
<dbReference type="VEuPathDB" id="FungiDB:CHGG_05593"/>
<dbReference type="eggNOG" id="KOG0595">
    <property type="taxonomic scope" value="Eukaryota"/>
</dbReference>
<dbReference type="HOGENOM" id="CLU_006447_0_0_1"/>
<dbReference type="InParanoid" id="Q2H6X2"/>
<dbReference type="OMA" id="INNVVQW"/>
<dbReference type="OrthoDB" id="346907at2759"/>
<dbReference type="Proteomes" id="UP000001056">
    <property type="component" value="Unassembled WGS sequence"/>
</dbReference>
<dbReference type="GO" id="GO:1990316">
    <property type="term" value="C:Atg1/ULK1 kinase complex"/>
    <property type="evidence" value="ECO:0007669"/>
    <property type="project" value="EnsemblFungi"/>
</dbReference>
<dbReference type="GO" id="GO:0000421">
    <property type="term" value="C:autophagosome membrane"/>
    <property type="evidence" value="ECO:0007669"/>
    <property type="project" value="EnsemblFungi"/>
</dbReference>
<dbReference type="GO" id="GO:0005829">
    <property type="term" value="C:cytosol"/>
    <property type="evidence" value="ECO:0007669"/>
    <property type="project" value="EnsemblFungi"/>
</dbReference>
<dbReference type="GO" id="GO:0061908">
    <property type="term" value="C:phagophore"/>
    <property type="evidence" value="ECO:0007669"/>
    <property type="project" value="EnsemblFungi"/>
</dbReference>
<dbReference type="GO" id="GO:0034045">
    <property type="term" value="C:phagophore assembly site membrane"/>
    <property type="evidence" value="ECO:0007669"/>
    <property type="project" value="UniProtKB-SubCell"/>
</dbReference>
<dbReference type="GO" id="GO:0120095">
    <property type="term" value="C:vacuole-isolation membrane contact site"/>
    <property type="evidence" value="ECO:0007669"/>
    <property type="project" value="EnsemblFungi"/>
</dbReference>
<dbReference type="GO" id="GO:0005524">
    <property type="term" value="F:ATP binding"/>
    <property type="evidence" value="ECO:0007669"/>
    <property type="project" value="UniProtKB-KW"/>
</dbReference>
<dbReference type="GO" id="GO:0106310">
    <property type="term" value="F:protein serine kinase activity"/>
    <property type="evidence" value="ECO:0007669"/>
    <property type="project" value="RHEA"/>
</dbReference>
<dbReference type="GO" id="GO:0004674">
    <property type="term" value="F:protein serine/threonine kinase activity"/>
    <property type="evidence" value="ECO:0007669"/>
    <property type="project" value="UniProtKB-KW"/>
</dbReference>
<dbReference type="GO" id="GO:0000422">
    <property type="term" value="P:autophagy of mitochondrion"/>
    <property type="evidence" value="ECO:0007669"/>
    <property type="project" value="EnsemblFungi"/>
</dbReference>
<dbReference type="GO" id="GO:0006995">
    <property type="term" value="P:cellular response to nitrogen starvation"/>
    <property type="evidence" value="ECO:0007669"/>
    <property type="project" value="EnsemblFungi"/>
</dbReference>
<dbReference type="GO" id="GO:0051365">
    <property type="term" value="P:cellular response to potassium ion starvation"/>
    <property type="evidence" value="ECO:0007669"/>
    <property type="project" value="EnsemblFungi"/>
</dbReference>
<dbReference type="GO" id="GO:0034727">
    <property type="term" value="P:piecemeal microautophagy of the nucleus"/>
    <property type="evidence" value="ECO:0007669"/>
    <property type="project" value="EnsemblFungi"/>
</dbReference>
<dbReference type="GO" id="GO:0034497">
    <property type="term" value="P:protein localization to phagophore assembly site"/>
    <property type="evidence" value="ECO:0007669"/>
    <property type="project" value="EnsemblFungi"/>
</dbReference>
<dbReference type="GO" id="GO:0015031">
    <property type="term" value="P:protein transport"/>
    <property type="evidence" value="ECO:0007669"/>
    <property type="project" value="UniProtKB-KW"/>
</dbReference>
<dbReference type="GO" id="GO:0010506">
    <property type="term" value="P:regulation of autophagy"/>
    <property type="evidence" value="ECO:0007669"/>
    <property type="project" value="InterPro"/>
</dbReference>
<dbReference type="GO" id="GO:0061709">
    <property type="term" value="P:reticulophagy"/>
    <property type="evidence" value="ECO:0007669"/>
    <property type="project" value="EnsemblFungi"/>
</dbReference>
<dbReference type="CDD" id="cd14009">
    <property type="entry name" value="STKc_ATG1_ULK_like"/>
    <property type="match status" value="1"/>
</dbReference>
<dbReference type="FunFam" id="3.30.200.20:FF:000042">
    <property type="entry name" value="Aurora kinase A"/>
    <property type="match status" value="1"/>
</dbReference>
<dbReference type="FunFam" id="1.10.510.10:FF:000817">
    <property type="entry name" value="Serine/threonine-protein kinase ATG1"/>
    <property type="match status" value="1"/>
</dbReference>
<dbReference type="Gene3D" id="1.10.510.10">
    <property type="entry name" value="Transferase(Phosphotransferase) domain 1"/>
    <property type="match status" value="1"/>
</dbReference>
<dbReference type="InterPro" id="IPR045269">
    <property type="entry name" value="Atg1-like"/>
</dbReference>
<dbReference type="InterPro" id="IPR048941">
    <property type="entry name" value="ATG1-like_MIT2"/>
</dbReference>
<dbReference type="InterPro" id="IPR022708">
    <property type="entry name" value="Atg1-like_tMIT"/>
</dbReference>
<dbReference type="InterPro" id="IPR011009">
    <property type="entry name" value="Kinase-like_dom_sf"/>
</dbReference>
<dbReference type="InterPro" id="IPR000719">
    <property type="entry name" value="Prot_kinase_dom"/>
</dbReference>
<dbReference type="InterPro" id="IPR017441">
    <property type="entry name" value="Protein_kinase_ATP_BS"/>
</dbReference>
<dbReference type="InterPro" id="IPR008271">
    <property type="entry name" value="Ser/Thr_kinase_AS"/>
</dbReference>
<dbReference type="PANTHER" id="PTHR24348:SF22">
    <property type="entry name" value="NON-SPECIFIC SERINE_THREONINE PROTEIN KINASE"/>
    <property type="match status" value="1"/>
</dbReference>
<dbReference type="PANTHER" id="PTHR24348">
    <property type="entry name" value="SERINE/THREONINE-PROTEIN KINASE UNC-51-RELATED"/>
    <property type="match status" value="1"/>
</dbReference>
<dbReference type="Pfam" id="PF12063">
    <property type="entry name" value="ATG1-like_MIT1"/>
    <property type="match status" value="1"/>
</dbReference>
<dbReference type="Pfam" id="PF21127">
    <property type="entry name" value="ATG1-like_MIT2"/>
    <property type="match status" value="1"/>
</dbReference>
<dbReference type="Pfam" id="PF00069">
    <property type="entry name" value="Pkinase"/>
    <property type="match status" value="1"/>
</dbReference>
<dbReference type="SMART" id="SM00220">
    <property type="entry name" value="S_TKc"/>
    <property type="match status" value="1"/>
</dbReference>
<dbReference type="SUPFAM" id="SSF56112">
    <property type="entry name" value="Protein kinase-like (PK-like)"/>
    <property type="match status" value="1"/>
</dbReference>
<dbReference type="PROSITE" id="PS00107">
    <property type="entry name" value="PROTEIN_KINASE_ATP"/>
    <property type="match status" value="1"/>
</dbReference>
<dbReference type="PROSITE" id="PS50011">
    <property type="entry name" value="PROTEIN_KINASE_DOM"/>
    <property type="match status" value="1"/>
</dbReference>
<dbReference type="PROSITE" id="PS00108">
    <property type="entry name" value="PROTEIN_KINASE_ST"/>
    <property type="match status" value="1"/>
</dbReference>
<comment type="function">
    <text evidence="1">Serine/threonine protein kinase involved in the cytoplasm to vacuole transport (Cvt) and found to be essential in autophagy, where it is required for the formation of autophagosomes. Involved in the clearance of protein aggregates which cannot be efficiently cleared by the proteasome. Required for selective autophagic degradation of the nucleus (nucleophagy) as well as for mitophagy which contributes to regulate mitochondrial quantity and quality by eliminating the mitochondria to a basal level to fulfill cellular energy requirements and preventing excess ROS production. Also involved in endoplasmic reticulum-specific autophagic process, in selective removal of ER-associated degradation (ERAD) substrates. Plays a key role in ATG9 and ATG23 cycling through the pre-autophagosomal structure and is necessary to promote ATG18 binding to ATG9 through phosphorylation of ATG9. Catalyzes phosphorylation of ATG4, decreasing the interaction between ATG4 and ATG8 and impairing deconjugation of PE-conjugated forms of ATG8.</text>
</comment>
<comment type="catalytic activity">
    <reaction evidence="1">
        <text>L-seryl-[protein] + ATP = O-phospho-L-seryl-[protein] + ADP + H(+)</text>
        <dbReference type="Rhea" id="RHEA:17989"/>
        <dbReference type="Rhea" id="RHEA-COMP:9863"/>
        <dbReference type="Rhea" id="RHEA-COMP:11604"/>
        <dbReference type="ChEBI" id="CHEBI:15378"/>
        <dbReference type="ChEBI" id="CHEBI:29999"/>
        <dbReference type="ChEBI" id="CHEBI:30616"/>
        <dbReference type="ChEBI" id="CHEBI:83421"/>
        <dbReference type="ChEBI" id="CHEBI:456216"/>
        <dbReference type="EC" id="2.7.11.1"/>
    </reaction>
</comment>
<comment type="catalytic activity">
    <reaction evidence="1">
        <text>L-threonyl-[protein] + ATP = O-phospho-L-threonyl-[protein] + ADP + H(+)</text>
        <dbReference type="Rhea" id="RHEA:46608"/>
        <dbReference type="Rhea" id="RHEA-COMP:11060"/>
        <dbReference type="Rhea" id="RHEA-COMP:11605"/>
        <dbReference type="ChEBI" id="CHEBI:15378"/>
        <dbReference type="ChEBI" id="CHEBI:30013"/>
        <dbReference type="ChEBI" id="CHEBI:30616"/>
        <dbReference type="ChEBI" id="CHEBI:61977"/>
        <dbReference type="ChEBI" id="CHEBI:456216"/>
        <dbReference type="EC" id="2.7.11.1"/>
    </reaction>
</comment>
<comment type="subunit">
    <text evidence="1">Homodimer. Forms a ternary complex with ATG13 and ATG17.</text>
</comment>
<comment type="subcellular location">
    <subcellularLocation>
        <location evidence="1">Cytoplasm</location>
    </subcellularLocation>
    <subcellularLocation>
        <location evidence="1">Preautophagosomal structure membrane</location>
        <topology evidence="1">Peripheral membrane protein</topology>
    </subcellularLocation>
</comment>
<comment type="similarity">
    <text evidence="2">Belongs to the protein kinase superfamily. Ser/Thr protein kinase family. APG1/unc-51/ULK1 subfamily.</text>
</comment>
<proteinExistence type="inferred from homology"/>
<protein>
    <recommendedName>
        <fullName evidence="1">Serine/threonine-protein kinase ATG1</fullName>
        <ecNumber evidence="1">2.7.11.1</ecNumber>
    </recommendedName>
    <alternativeName>
        <fullName evidence="1">Autophagy-related protein 1</fullName>
    </alternativeName>
</protein>